<protein>
    <recommendedName>
        <fullName evidence="1">NAD(P)H-quinone oxidoreductase chain 4, chloroplastic</fullName>
        <ecNumber evidence="1">7.1.1.-</ecNumber>
    </recommendedName>
    <alternativeName>
        <fullName evidence="1">NAD(P)H dehydrogenase, chain 4</fullName>
    </alternativeName>
    <alternativeName>
        <fullName evidence="1">NADH-plastoquinone oxidoreductase chain 4</fullName>
    </alternativeName>
</protein>
<feature type="chain" id="PRO_0000275914" description="NAD(P)H-quinone oxidoreductase chain 4, chloroplastic">
    <location>
        <begin position="1"/>
        <end position="500"/>
    </location>
</feature>
<feature type="transmembrane region" description="Helical" evidence="1">
    <location>
        <begin position="4"/>
        <end position="24"/>
    </location>
</feature>
<feature type="transmembrane region" description="Helical" evidence="1">
    <location>
        <begin position="37"/>
        <end position="57"/>
    </location>
</feature>
<feature type="transmembrane region" description="Helical" evidence="1">
    <location>
        <begin position="84"/>
        <end position="104"/>
    </location>
</feature>
<feature type="transmembrane region" description="Helical" evidence="1">
    <location>
        <begin position="111"/>
        <end position="129"/>
    </location>
</feature>
<feature type="transmembrane region" description="Helical" evidence="1">
    <location>
        <begin position="134"/>
        <end position="154"/>
    </location>
</feature>
<feature type="transmembrane region" description="Helical" evidence="1">
    <location>
        <begin position="167"/>
        <end position="187"/>
    </location>
</feature>
<feature type="transmembrane region" description="Helical" evidence="1">
    <location>
        <begin position="208"/>
        <end position="228"/>
    </location>
</feature>
<feature type="transmembrane region" description="Helical" evidence="1">
    <location>
        <begin position="242"/>
        <end position="262"/>
    </location>
</feature>
<feature type="transmembrane region" description="Helical" evidence="1">
    <location>
        <begin position="272"/>
        <end position="292"/>
    </location>
</feature>
<feature type="transmembrane region" description="Helical" evidence="1">
    <location>
        <begin position="305"/>
        <end position="325"/>
    </location>
</feature>
<feature type="transmembrane region" description="Helical" evidence="1">
    <location>
        <begin position="330"/>
        <end position="350"/>
    </location>
</feature>
<feature type="transmembrane region" description="Helical" evidence="1">
    <location>
        <begin position="374"/>
        <end position="396"/>
    </location>
</feature>
<feature type="transmembrane region" description="Helical" evidence="1">
    <location>
        <begin position="416"/>
        <end position="436"/>
    </location>
</feature>
<feature type="transmembrane region" description="Helical" evidence="1">
    <location>
        <begin position="462"/>
        <end position="482"/>
    </location>
</feature>
<proteinExistence type="inferred from homology"/>
<reference key="1">
    <citation type="journal article" date="2006" name="BMC Evol. Biol.">
        <title>Complete plastid genome sequences of Drimys, Liriodendron, and Piper: implications for the phylogenetic relationships of magnoliids.</title>
        <authorList>
            <person name="Cai Z."/>
            <person name="Penaflor C."/>
            <person name="Kuehl J.V."/>
            <person name="Leebens-Mack J."/>
            <person name="Carlson J.E."/>
            <person name="dePamphilis C.W."/>
            <person name="Boore J.L."/>
            <person name="Jansen R.K."/>
        </authorList>
    </citation>
    <scope>NUCLEOTIDE SEQUENCE [LARGE SCALE GENOMIC DNA]</scope>
</reference>
<keyword id="KW-0150">Chloroplast</keyword>
<keyword id="KW-0472">Membrane</keyword>
<keyword id="KW-0520">NAD</keyword>
<keyword id="KW-0521">NADP</keyword>
<keyword id="KW-0934">Plastid</keyword>
<keyword id="KW-0618">Plastoquinone</keyword>
<keyword id="KW-0874">Quinone</keyword>
<keyword id="KW-0793">Thylakoid</keyword>
<keyword id="KW-1278">Translocase</keyword>
<keyword id="KW-0812">Transmembrane</keyword>
<keyword id="KW-1133">Transmembrane helix</keyword>
<comment type="catalytic activity">
    <reaction evidence="1">
        <text>a plastoquinone + NADH + (n+1) H(+)(in) = a plastoquinol + NAD(+) + n H(+)(out)</text>
        <dbReference type="Rhea" id="RHEA:42608"/>
        <dbReference type="Rhea" id="RHEA-COMP:9561"/>
        <dbReference type="Rhea" id="RHEA-COMP:9562"/>
        <dbReference type="ChEBI" id="CHEBI:15378"/>
        <dbReference type="ChEBI" id="CHEBI:17757"/>
        <dbReference type="ChEBI" id="CHEBI:57540"/>
        <dbReference type="ChEBI" id="CHEBI:57945"/>
        <dbReference type="ChEBI" id="CHEBI:62192"/>
    </reaction>
</comment>
<comment type="catalytic activity">
    <reaction evidence="1">
        <text>a plastoquinone + NADPH + (n+1) H(+)(in) = a plastoquinol + NADP(+) + n H(+)(out)</text>
        <dbReference type="Rhea" id="RHEA:42612"/>
        <dbReference type="Rhea" id="RHEA-COMP:9561"/>
        <dbReference type="Rhea" id="RHEA-COMP:9562"/>
        <dbReference type="ChEBI" id="CHEBI:15378"/>
        <dbReference type="ChEBI" id="CHEBI:17757"/>
        <dbReference type="ChEBI" id="CHEBI:57783"/>
        <dbReference type="ChEBI" id="CHEBI:58349"/>
        <dbReference type="ChEBI" id="CHEBI:62192"/>
    </reaction>
</comment>
<comment type="subcellular location">
    <subcellularLocation>
        <location evidence="1">Plastid</location>
        <location evidence="1">Chloroplast thylakoid membrane</location>
        <topology evidence="1">Multi-pass membrane protein</topology>
    </subcellularLocation>
</comment>
<comment type="similarity">
    <text evidence="1">Belongs to the complex I subunit 4 family.</text>
</comment>
<dbReference type="EC" id="7.1.1.-" evidence="1"/>
<dbReference type="EMBL" id="DQ899947">
    <property type="protein sequence ID" value="ABI32559.1"/>
    <property type="molecule type" value="Genomic_DNA"/>
</dbReference>
<dbReference type="RefSeq" id="YP_740252.1">
    <property type="nucleotide sequence ID" value="NC_008326.1"/>
</dbReference>
<dbReference type="SMR" id="Q0G9G9"/>
<dbReference type="GeneID" id="4266684"/>
<dbReference type="GO" id="GO:0009535">
    <property type="term" value="C:chloroplast thylakoid membrane"/>
    <property type="evidence" value="ECO:0007669"/>
    <property type="project" value="UniProtKB-SubCell"/>
</dbReference>
<dbReference type="GO" id="GO:0008137">
    <property type="term" value="F:NADH dehydrogenase (ubiquinone) activity"/>
    <property type="evidence" value="ECO:0007669"/>
    <property type="project" value="InterPro"/>
</dbReference>
<dbReference type="GO" id="GO:0048039">
    <property type="term" value="F:ubiquinone binding"/>
    <property type="evidence" value="ECO:0007669"/>
    <property type="project" value="TreeGrafter"/>
</dbReference>
<dbReference type="GO" id="GO:0042773">
    <property type="term" value="P:ATP synthesis coupled electron transport"/>
    <property type="evidence" value="ECO:0007669"/>
    <property type="project" value="InterPro"/>
</dbReference>
<dbReference type="GO" id="GO:0015990">
    <property type="term" value="P:electron transport coupled proton transport"/>
    <property type="evidence" value="ECO:0007669"/>
    <property type="project" value="TreeGrafter"/>
</dbReference>
<dbReference type="HAMAP" id="MF_00491">
    <property type="entry name" value="NDH1_NuoM"/>
    <property type="match status" value="1"/>
</dbReference>
<dbReference type="InterPro" id="IPR022997">
    <property type="entry name" value="NADH_Q_OxRdtase_chain4"/>
</dbReference>
<dbReference type="InterPro" id="IPR010227">
    <property type="entry name" value="NADH_Q_OxRdtase_chainM/4"/>
</dbReference>
<dbReference type="InterPro" id="IPR003918">
    <property type="entry name" value="NADH_UbQ_OxRdtase"/>
</dbReference>
<dbReference type="InterPro" id="IPR001750">
    <property type="entry name" value="ND/Mrp_TM"/>
</dbReference>
<dbReference type="NCBIfam" id="TIGR01972">
    <property type="entry name" value="NDH_I_M"/>
    <property type="match status" value="1"/>
</dbReference>
<dbReference type="PANTHER" id="PTHR43507:SF21">
    <property type="entry name" value="NAD(P)H-QUINONE OXIDOREDUCTASE CHAIN 4, CHLOROPLASTIC"/>
    <property type="match status" value="1"/>
</dbReference>
<dbReference type="PANTHER" id="PTHR43507">
    <property type="entry name" value="NADH-UBIQUINONE OXIDOREDUCTASE CHAIN 4"/>
    <property type="match status" value="1"/>
</dbReference>
<dbReference type="Pfam" id="PF00361">
    <property type="entry name" value="Proton_antipo_M"/>
    <property type="match status" value="1"/>
</dbReference>
<dbReference type="PRINTS" id="PR01437">
    <property type="entry name" value="NUOXDRDTASE4"/>
</dbReference>
<organism>
    <name type="scientific">Liriodendron tulipifera</name>
    <name type="common">Tuliptree</name>
    <name type="synonym">Tulip poplar</name>
    <dbReference type="NCBI Taxonomy" id="3415"/>
    <lineage>
        <taxon>Eukaryota</taxon>
        <taxon>Viridiplantae</taxon>
        <taxon>Streptophyta</taxon>
        <taxon>Embryophyta</taxon>
        <taxon>Tracheophyta</taxon>
        <taxon>Spermatophyta</taxon>
        <taxon>Magnoliopsida</taxon>
        <taxon>Magnoliidae</taxon>
        <taxon>Magnoliales</taxon>
        <taxon>Magnoliaceae</taxon>
        <taxon>Liriodendron</taxon>
    </lineage>
</organism>
<accession>Q0G9G9</accession>
<name>NU4C_LIRTU</name>
<sequence length="500" mass="56029">MSYFPWLTIIVVLPIFAGSSIFFFPHRGNKVVRWYTICICLLELLLTTYAFCYHFQLDDPLIQLEEDYKWINIFDFHWRLGIDGLSIGPILLTGFITTLATLAARPVTRDSRLFHFLMLAMYSGQIGSFSSRDLLLFFIMWELELIPVYLLLSMWGGKKRLYSATKFILYTAGGSIFLLMGVPGMGLYGSNEPILNFETSANQSYPLALEIIFYFGFLIAYAVKSPIIPLHTWLPDTHGEAHYSTCMLLAGILLKMGAYGLVRINMELLPHAHSIFSPWLMIVGTIQIIYAASTSSGQSNLKKRIAYSSVSHMGFTIIGIGSITDTGLNGAILQIISHGFIGAALFFLAGTSYDRIRLVYLDEMGGIAIPMPKIFTMFSSFSMASLALPGMSGFVAESVVFWGIITSPKYLLMPKILITFVMAIGMILTPIYSLSMSRQMFYGYKLFNVPNSYFLDSGPRELFVSICIFLPVIGIGIYPDFVLSLSVDKVEAILANYFYK</sequence>
<geneLocation type="chloroplast"/>
<evidence type="ECO:0000255" key="1">
    <source>
        <dbReference type="HAMAP-Rule" id="MF_00491"/>
    </source>
</evidence>
<gene>
    <name evidence="1" type="primary">ndhD</name>
</gene>